<dbReference type="EC" id="2.7.8.13" evidence="1"/>
<dbReference type="EMBL" id="CP001298">
    <property type="protein sequence ID" value="ACK85863.1"/>
    <property type="molecule type" value="Genomic_DNA"/>
</dbReference>
<dbReference type="RefSeq" id="WP_003603658.1">
    <property type="nucleotide sequence ID" value="NC_011757.1"/>
</dbReference>
<dbReference type="SMR" id="B7KU72"/>
<dbReference type="GeneID" id="72992367"/>
<dbReference type="KEGG" id="mch:Mchl_5099"/>
<dbReference type="HOGENOM" id="CLU_023982_0_0_5"/>
<dbReference type="UniPathway" id="UPA00219"/>
<dbReference type="Proteomes" id="UP000002385">
    <property type="component" value="Chromosome"/>
</dbReference>
<dbReference type="GO" id="GO:0005886">
    <property type="term" value="C:plasma membrane"/>
    <property type="evidence" value="ECO:0007669"/>
    <property type="project" value="UniProtKB-SubCell"/>
</dbReference>
<dbReference type="GO" id="GO:0046872">
    <property type="term" value="F:metal ion binding"/>
    <property type="evidence" value="ECO:0007669"/>
    <property type="project" value="UniProtKB-KW"/>
</dbReference>
<dbReference type="GO" id="GO:0008963">
    <property type="term" value="F:phospho-N-acetylmuramoyl-pentapeptide-transferase activity"/>
    <property type="evidence" value="ECO:0007669"/>
    <property type="project" value="UniProtKB-UniRule"/>
</dbReference>
<dbReference type="GO" id="GO:0051992">
    <property type="term" value="F:UDP-N-acetylmuramoyl-L-alanyl-D-glutamyl-meso-2,6-diaminopimelyl-D-alanyl-D-alanine:undecaprenyl-phosphate transferase activity"/>
    <property type="evidence" value="ECO:0007669"/>
    <property type="project" value="RHEA"/>
</dbReference>
<dbReference type="GO" id="GO:0051301">
    <property type="term" value="P:cell division"/>
    <property type="evidence" value="ECO:0007669"/>
    <property type="project" value="UniProtKB-KW"/>
</dbReference>
<dbReference type="GO" id="GO:0071555">
    <property type="term" value="P:cell wall organization"/>
    <property type="evidence" value="ECO:0007669"/>
    <property type="project" value="UniProtKB-KW"/>
</dbReference>
<dbReference type="GO" id="GO:0009252">
    <property type="term" value="P:peptidoglycan biosynthetic process"/>
    <property type="evidence" value="ECO:0007669"/>
    <property type="project" value="UniProtKB-UniRule"/>
</dbReference>
<dbReference type="GO" id="GO:0008360">
    <property type="term" value="P:regulation of cell shape"/>
    <property type="evidence" value="ECO:0007669"/>
    <property type="project" value="UniProtKB-KW"/>
</dbReference>
<dbReference type="CDD" id="cd06852">
    <property type="entry name" value="GT_MraY"/>
    <property type="match status" value="1"/>
</dbReference>
<dbReference type="HAMAP" id="MF_00038">
    <property type="entry name" value="MraY"/>
    <property type="match status" value="1"/>
</dbReference>
<dbReference type="InterPro" id="IPR000715">
    <property type="entry name" value="Glycosyl_transferase_4"/>
</dbReference>
<dbReference type="InterPro" id="IPR003524">
    <property type="entry name" value="PNAcMuramoyl-5peptid_Trfase"/>
</dbReference>
<dbReference type="InterPro" id="IPR018480">
    <property type="entry name" value="PNAcMuramoyl-5peptid_Trfase_CS"/>
</dbReference>
<dbReference type="NCBIfam" id="TIGR00445">
    <property type="entry name" value="mraY"/>
    <property type="match status" value="1"/>
</dbReference>
<dbReference type="PANTHER" id="PTHR22926">
    <property type="entry name" value="PHOSPHO-N-ACETYLMURAMOYL-PENTAPEPTIDE-TRANSFERASE"/>
    <property type="match status" value="1"/>
</dbReference>
<dbReference type="PANTHER" id="PTHR22926:SF5">
    <property type="entry name" value="PHOSPHO-N-ACETYLMURAMOYL-PENTAPEPTIDE-TRANSFERASE HOMOLOG"/>
    <property type="match status" value="1"/>
</dbReference>
<dbReference type="Pfam" id="PF00953">
    <property type="entry name" value="Glycos_transf_4"/>
    <property type="match status" value="1"/>
</dbReference>
<dbReference type="Pfam" id="PF10555">
    <property type="entry name" value="MraY_sig1"/>
    <property type="match status" value="1"/>
</dbReference>
<dbReference type="PROSITE" id="PS01347">
    <property type="entry name" value="MRAY_1"/>
    <property type="match status" value="1"/>
</dbReference>
<dbReference type="PROSITE" id="PS01348">
    <property type="entry name" value="MRAY_2"/>
    <property type="match status" value="1"/>
</dbReference>
<sequence length="360" mass="38970">MLYLLSELSGTLTPLNVFRYITFRTGGALFTAGFFVFWFGPWIISLLRLRQGKGQPIREDGPASHLTKRGTPTMGGLMILAGAVVSILLWTNPHNHYVWVTLAVTLGFGAIGFYDDYLKVTKQSHKGFSGRFRLLLEFAIAGAACLMISLYSPAGLQNQLAFPVLKDTLLNLGWFWVPFAAFVIVGAGNAVNITDGLDGLAIVPVMIACATFGIIAYLVGNVIYAGYLQVNYVRDTGELAVVCGAVIGAGLGFLWFNAPPAQIFMGDTGSLALGGLLGSIAVAAKHEIVLAIVGGLFVLEIMSVIIQVVSFKLTGKRVFRMAPIHHHFEQKGWKEPQVVIRFWIIAVILALVGLATLKLR</sequence>
<protein>
    <recommendedName>
        <fullName evidence="1">Phospho-N-acetylmuramoyl-pentapeptide-transferase</fullName>
        <ecNumber evidence="1">2.7.8.13</ecNumber>
    </recommendedName>
    <alternativeName>
        <fullName evidence="1">UDP-MurNAc-pentapeptide phosphotransferase</fullName>
    </alternativeName>
</protein>
<proteinExistence type="inferred from homology"/>
<accession>B7KU72</accession>
<reference key="1">
    <citation type="submission" date="2008-12" db="EMBL/GenBank/DDBJ databases">
        <title>Complete sequence of chromosome of Methylobacterium chloromethanicum CM4.</title>
        <authorList>
            <consortium name="US DOE Joint Genome Institute"/>
            <person name="Lucas S."/>
            <person name="Copeland A."/>
            <person name="Lapidus A."/>
            <person name="Glavina del Rio T."/>
            <person name="Dalin E."/>
            <person name="Tice H."/>
            <person name="Bruce D."/>
            <person name="Goodwin L."/>
            <person name="Pitluck S."/>
            <person name="Chertkov O."/>
            <person name="Brettin T."/>
            <person name="Detter J.C."/>
            <person name="Han C."/>
            <person name="Larimer F."/>
            <person name="Land M."/>
            <person name="Hauser L."/>
            <person name="Kyrpides N."/>
            <person name="Mikhailova N."/>
            <person name="Marx C."/>
            <person name="Richardson P."/>
        </authorList>
    </citation>
    <scope>NUCLEOTIDE SEQUENCE [LARGE SCALE GENOMIC DNA]</scope>
    <source>
        <strain>CM4 / NCIMB 13688</strain>
    </source>
</reference>
<name>MRAY_METC4</name>
<organism>
    <name type="scientific">Methylorubrum extorquens (strain CM4 / NCIMB 13688)</name>
    <name type="common">Methylobacterium extorquens</name>
    <dbReference type="NCBI Taxonomy" id="440085"/>
    <lineage>
        <taxon>Bacteria</taxon>
        <taxon>Pseudomonadati</taxon>
        <taxon>Pseudomonadota</taxon>
        <taxon>Alphaproteobacteria</taxon>
        <taxon>Hyphomicrobiales</taxon>
        <taxon>Methylobacteriaceae</taxon>
        <taxon>Methylorubrum</taxon>
    </lineage>
</organism>
<comment type="function">
    <text evidence="1">Catalyzes the initial step of the lipid cycle reactions in the biosynthesis of the cell wall peptidoglycan: transfers peptidoglycan precursor phospho-MurNAc-pentapeptide from UDP-MurNAc-pentapeptide onto the lipid carrier undecaprenyl phosphate, yielding undecaprenyl-pyrophosphoryl-MurNAc-pentapeptide, known as lipid I.</text>
</comment>
<comment type="catalytic activity">
    <reaction evidence="1">
        <text>UDP-N-acetyl-alpha-D-muramoyl-L-alanyl-gamma-D-glutamyl-meso-2,6-diaminopimeloyl-D-alanyl-D-alanine + di-trans,octa-cis-undecaprenyl phosphate = di-trans,octa-cis-undecaprenyl diphospho-N-acetyl-alpha-D-muramoyl-L-alanyl-D-glutamyl-meso-2,6-diaminopimeloyl-D-alanyl-D-alanine + UMP</text>
        <dbReference type="Rhea" id="RHEA:28386"/>
        <dbReference type="ChEBI" id="CHEBI:57865"/>
        <dbReference type="ChEBI" id="CHEBI:60392"/>
        <dbReference type="ChEBI" id="CHEBI:61386"/>
        <dbReference type="ChEBI" id="CHEBI:61387"/>
        <dbReference type="EC" id="2.7.8.13"/>
    </reaction>
</comment>
<comment type="cofactor">
    <cofactor evidence="1">
        <name>Mg(2+)</name>
        <dbReference type="ChEBI" id="CHEBI:18420"/>
    </cofactor>
</comment>
<comment type="pathway">
    <text evidence="1">Cell wall biogenesis; peptidoglycan biosynthesis.</text>
</comment>
<comment type="subcellular location">
    <subcellularLocation>
        <location evidence="1">Cell inner membrane</location>
        <topology evidence="1">Multi-pass membrane protein</topology>
    </subcellularLocation>
</comment>
<comment type="similarity">
    <text evidence="1">Belongs to the glycosyltransferase 4 family. MraY subfamily.</text>
</comment>
<gene>
    <name evidence="1" type="primary">mraY</name>
    <name type="ordered locus">Mchl_5099</name>
</gene>
<feature type="chain" id="PRO_1000117184" description="Phospho-N-acetylmuramoyl-pentapeptide-transferase">
    <location>
        <begin position="1"/>
        <end position="360"/>
    </location>
</feature>
<feature type="transmembrane region" description="Helical" evidence="1">
    <location>
        <begin position="27"/>
        <end position="47"/>
    </location>
</feature>
<feature type="transmembrane region" description="Helical" evidence="1">
    <location>
        <begin position="70"/>
        <end position="90"/>
    </location>
</feature>
<feature type="transmembrane region" description="Helical" evidence="1">
    <location>
        <begin position="98"/>
        <end position="118"/>
    </location>
</feature>
<feature type="transmembrane region" description="Helical" evidence="1">
    <location>
        <begin position="134"/>
        <end position="154"/>
    </location>
</feature>
<feature type="transmembrane region" description="Helical" evidence="1">
    <location>
        <begin position="168"/>
        <end position="188"/>
    </location>
</feature>
<feature type="transmembrane region" description="Helical" evidence="1">
    <location>
        <begin position="199"/>
        <end position="219"/>
    </location>
</feature>
<feature type="transmembrane region" description="Helical" evidence="1">
    <location>
        <begin position="239"/>
        <end position="259"/>
    </location>
</feature>
<feature type="transmembrane region" description="Helical" evidence="1">
    <location>
        <begin position="263"/>
        <end position="283"/>
    </location>
</feature>
<feature type="transmembrane region" description="Helical" evidence="1">
    <location>
        <begin position="288"/>
        <end position="308"/>
    </location>
</feature>
<feature type="transmembrane region" description="Helical" evidence="1">
    <location>
        <begin position="337"/>
        <end position="357"/>
    </location>
</feature>
<keyword id="KW-0131">Cell cycle</keyword>
<keyword id="KW-0132">Cell division</keyword>
<keyword id="KW-0997">Cell inner membrane</keyword>
<keyword id="KW-1003">Cell membrane</keyword>
<keyword id="KW-0133">Cell shape</keyword>
<keyword id="KW-0961">Cell wall biogenesis/degradation</keyword>
<keyword id="KW-0460">Magnesium</keyword>
<keyword id="KW-0472">Membrane</keyword>
<keyword id="KW-0479">Metal-binding</keyword>
<keyword id="KW-0573">Peptidoglycan synthesis</keyword>
<keyword id="KW-0808">Transferase</keyword>
<keyword id="KW-0812">Transmembrane</keyword>
<keyword id="KW-1133">Transmembrane helix</keyword>
<evidence type="ECO:0000255" key="1">
    <source>
        <dbReference type="HAMAP-Rule" id="MF_00038"/>
    </source>
</evidence>